<proteinExistence type="evidence at protein level"/>
<dbReference type="EC" id="1.14.16.1"/>
<dbReference type="EMBL" id="M55915">
    <property type="protein sequence ID" value="AAA23115.1"/>
    <property type="status" value="ALT_FRAME"/>
    <property type="molecule type" value="Genomic_DNA"/>
</dbReference>
<dbReference type="EMBL" id="AF146711">
    <property type="protein sequence ID" value="AAD37774.1"/>
    <property type="molecule type" value="Genomic_DNA"/>
</dbReference>
<dbReference type="EMBL" id="AE016825">
    <property type="protein sequence ID" value="AAQ60846.1"/>
    <property type="molecule type" value="Genomic_DNA"/>
</dbReference>
<dbReference type="PIR" id="A40996">
    <property type="entry name" value="A40996"/>
</dbReference>
<dbReference type="RefSeq" id="WP_011136727.1">
    <property type="nucleotide sequence ID" value="NC_005085.1"/>
</dbReference>
<dbReference type="PDB" id="1LTU">
    <property type="method" value="X-ray"/>
    <property type="resolution" value="1.74 A"/>
    <property type="chains" value="A=1-297"/>
</dbReference>
<dbReference type="PDB" id="1LTV">
    <property type="method" value="X-ray"/>
    <property type="resolution" value="2.00 A"/>
    <property type="chains" value="A=1-297"/>
</dbReference>
<dbReference type="PDB" id="1LTZ">
    <property type="method" value="X-ray"/>
    <property type="resolution" value="1.40 A"/>
    <property type="chains" value="A=1-297"/>
</dbReference>
<dbReference type="PDB" id="3TCY">
    <property type="method" value="X-ray"/>
    <property type="resolution" value="1.55 A"/>
    <property type="chains" value="A=1-297"/>
</dbReference>
<dbReference type="PDB" id="3TK2">
    <property type="method" value="X-ray"/>
    <property type="resolution" value="1.35 A"/>
    <property type="chains" value="A=1-297"/>
</dbReference>
<dbReference type="PDB" id="3TK4">
    <property type="method" value="X-ray"/>
    <property type="resolution" value="1.50 A"/>
    <property type="chains" value="A=1-297"/>
</dbReference>
<dbReference type="PDB" id="4ESM">
    <property type="method" value="X-ray"/>
    <property type="resolution" value="1.35 A"/>
    <property type="chains" value="A=1-297"/>
</dbReference>
<dbReference type="PDB" id="4ETL">
    <property type="method" value="X-ray"/>
    <property type="resolution" value="1.49 A"/>
    <property type="chains" value="A=1-297"/>
</dbReference>
<dbReference type="PDB" id="4JPX">
    <property type="method" value="X-ray"/>
    <property type="resolution" value="1.55 A"/>
    <property type="chains" value="A=1-297"/>
</dbReference>
<dbReference type="PDB" id="4JPY">
    <property type="method" value="X-ray"/>
    <property type="resolution" value="2.13 A"/>
    <property type="chains" value="A=1-297"/>
</dbReference>
<dbReference type="PDB" id="4Q3W">
    <property type="method" value="X-ray"/>
    <property type="resolution" value="1.40 A"/>
    <property type="chains" value="A=1-297"/>
</dbReference>
<dbReference type="PDB" id="4Q3X">
    <property type="method" value="X-ray"/>
    <property type="resolution" value="1.35 A"/>
    <property type="chains" value="A=1-297"/>
</dbReference>
<dbReference type="PDB" id="4Q3Y">
    <property type="method" value="X-ray"/>
    <property type="resolution" value="1.40 A"/>
    <property type="chains" value="A=1-297"/>
</dbReference>
<dbReference type="PDB" id="4Q3Z">
    <property type="method" value="X-ray"/>
    <property type="resolution" value="1.35 A"/>
    <property type="chains" value="A=1-297"/>
</dbReference>
<dbReference type="PDBsum" id="1LTU"/>
<dbReference type="PDBsum" id="1LTV"/>
<dbReference type="PDBsum" id="1LTZ"/>
<dbReference type="PDBsum" id="3TCY"/>
<dbReference type="PDBsum" id="3TK2"/>
<dbReference type="PDBsum" id="3TK4"/>
<dbReference type="PDBsum" id="4ESM"/>
<dbReference type="PDBsum" id="4ETL"/>
<dbReference type="PDBsum" id="4JPX"/>
<dbReference type="PDBsum" id="4JPY"/>
<dbReference type="PDBsum" id="4Q3W"/>
<dbReference type="PDBsum" id="4Q3X"/>
<dbReference type="PDBsum" id="4Q3Y"/>
<dbReference type="PDBsum" id="4Q3Z"/>
<dbReference type="SMR" id="P30967"/>
<dbReference type="STRING" id="243365.CV_3180"/>
<dbReference type="KEGG" id="cvi:CV_3180"/>
<dbReference type="eggNOG" id="COG3186">
    <property type="taxonomic scope" value="Bacteria"/>
</dbReference>
<dbReference type="HOGENOM" id="CLU_023198_1_0_4"/>
<dbReference type="OrthoDB" id="9780502at2"/>
<dbReference type="BioCyc" id="MetaCyc:MONOMER-12067"/>
<dbReference type="BRENDA" id="1.14.16.1">
    <property type="organism ID" value="1370"/>
</dbReference>
<dbReference type="UniPathway" id="UPA00139">
    <property type="reaction ID" value="UER00337"/>
</dbReference>
<dbReference type="EvolutionaryTrace" id="P30967"/>
<dbReference type="Proteomes" id="UP000001424">
    <property type="component" value="Chromosome"/>
</dbReference>
<dbReference type="GO" id="GO:0005506">
    <property type="term" value="F:iron ion binding"/>
    <property type="evidence" value="ECO:0007669"/>
    <property type="project" value="InterPro"/>
</dbReference>
<dbReference type="GO" id="GO:0004505">
    <property type="term" value="F:phenylalanine 4-monooxygenase activity"/>
    <property type="evidence" value="ECO:0000314"/>
    <property type="project" value="CACAO"/>
</dbReference>
<dbReference type="GO" id="GO:0006559">
    <property type="term" value="P:L-phenylalanine catabolic process"/>
    <property type="evidence" value="ECO:0007669"/>
    <property type="project" value="UniProtKB-UniPathway"/>
</dbReference>
<dbReference type="CDD" id="cd03348">
    <property type="entry name" value="pro_PheOH"/>
    <property type="match status" value="1"/>
</dbReference>
<dbReference type="Gene3D" id="1.10.800.10">
    <property type="entry name" value="Aromatic amino acid hydroxylase"/>
    <property type="match status" value="1"/>
</dbReference>
<dbReference type="InterPro" id="IPR001273">
    <property type="entry name" value="ArAA_hydroxylase"/>
</dbReference>
<dbReference type="InterPro" id="IPR018301">
    <property type="entry name" value="ArAA_hydroxylase_Fe/CU_BS"/>
</dbReference>
<dbReference type="InterPro" id="IPR036951">
    <property type="entry name" value="ArAA_hydroxylase_sf"/>
</dbReference>
<dbReference type="InterPro" id="IPR036329">
    <property type="entry name" value="Aro-AA_hydroxylase_C_sf"/>
</dbReference>
<dbReference type="InterPro" id="IPR019774">
    <property type="entry name" value="Aromatic-AA_hydroxylase_C"/>
</dbReference>
<dbReference type="InterPro" id="IPR005960">
    <property type="entry name" value="Phe-4-hydroxylase_mono"/>
</dbReference>
<dbReference type="NCBIfam" id="TIGR01267">
    <property type="entry name" value="Phe4hydrox_mono"/>
    <property type="match status" value="1"/>
</dbReference>
<dbReference type="NCBIfam" id="NF008877">
    <property type="entry name" value="PRK11913.1-2"/>
    <property type="match status" value="1"/>
</dbReference>
<dbReference type="PANTHER" id="PTHR11473">
    <property type="entry name" value="AROMATIC AMINO ACID HYDROXYLASE"/>
    <property type="match status" value="1"/>
</dbReference>
<dbReference type="PANTHER" id="PTHR11473:SF24">
    <property type="entry name" value="PHENYLALANINE-4-HYDROXYLASE"/>
    <property type="match status" value="1"/>
</dbReference>
<dbReference type="Pfam" id="PF00351">
    <property type="entry name" value="Biopterin_H"/>
    <property type="match status" value="1"/>
</dbReference>
<dbReference type="PRINTS" id="PR00372">
    <property type="entry name" value="FYWHYDRXLASE"/>
</dbReference>
<dbReference type="SUPFAM" id="SSF56534">
    <property type="entry name" value="Aromatic aminoacid monoxygenases, catalytic and oligomerization domains"/>
    <property type="match status" value="1"/>
</dbReference>
<dbReference type="PROSITE" id="PS00367">
    <property type="entry name" value="BH4_AAA_HYDROXYL_1"/>
    <property type="match status" value="1"/>
</dbReference>
<dbReference type="PROSITE" id="PS51410">
    <property type="entry name" value="BH4_AAA_HYDROXYL_2"/>
    <property type="match status" value="1"/>
</dbReference>
<organism>
    <name type="scientific">Chromobacterium violaceum (strain ATCC 12472 / DSM 30191 / JCM 1249 / CCUG 213 / NBRC 12614 / NCIMB 9131 / NCTC 9757 / MK)</name>
    <dbReference type="NCBI Taxonomy" id="243365"/>
    <lineage>
        <taxon>Bacteria</taxon>
        <taxon>Pseudomonadati</taxon>
        <taxon>Pseudomonadota</taxon>
        <taxon>Betaproteobacteria</taxon>
        <taxon>Neisseriales</taxon>
        <taxon>Chromobacteriaceae</taxon>
        <taxon>Chromobacterium</taxon>
    </lineage>
</organism>
<accession>P30967</accession>
<accession>Q9R634</accession>
<accession>Q9XC88</accession>
<name>PH4H_CHRVO</name>
<comment type="catalytic activity">
    <reaction>
        <text>(6R)-L-erythro-5,6,7,8-tetrahydrobiopterin + L-phenylalanine + O2 = (4aS,6R)-4a-hydroxy-L-erythro-5,6,7,8-tetrahydrobiopterin + L-tyrosine</text>
        <dbReference type="Rhea" id="RHEA:20273"/>
        <dbReference type="ChEBI" id="CHEBI:15379"/>
        <dbReference type="ChEBI" id="CHEBI:15642"/>
        <dbReference type="ChEBI" id="CHEBI:58095"/>
        <dbReference type="ChEBI" id="CHEBI:58315"/>
        <dbReference type="ChEBI" id="CHEBI:59560"/>
        <dbReference type="EC" id="1.14.16.1"/>
    </reaction>
</comment>
<comment type="cofactor">
    <cofactor>
        <name>Fe(2+)</name>
        <dbReference type="ChEBI" id="CHEBI:29033"/>
    </cofactor>
</comment>
<comment type="pathway">
    <text>Amino-acid degradation; L-phenylalanine degradation; acetoacetate and fumarate from L-phenylalanine: step 1/6.</text>
</comment>
<comment type="subunit">
    <text>Monomer.</text>
</comment>
<comment type="similarity">
    <text evidence="1">Belongs to the biopterin-dependent aromatic amino acid hydroxylase family.</text>
</comment>
<comment type="sequence caution" evidence="1">
    <conflict type="frameshift">
        <sequence resource="EMBL-CDS" id="AAA23115"/>
    </conflict>
</comment>
<reference key="1">
    <citation type="journal article" date="1991" name="J. Biol. Chem.">
        <title>Cloning and expression of Chromobacterium violaceum phenylalanine hydroxylase in Escherichia coli and comparison of amino acid sequence with mammalian aromatic amino acid hydroxylases.</title>
        <authorList>
            <person name="Onishi A."/>
            <person name="Liotta L.J."/>
            <person name="Benkovic S.J."/>
        </authorList>
    </citation>
    <scope>NUCLEOTIDE SEQUENCE [GENOMIC DNA]</scope>
    <scope>PROTEIN SEQUENCE OF 1-20</scope>
    <source>
        <strain>ATCC 12540 / LMG 3962 / NCTC 9695</strain>
    </source>
</reference>
<reference key="2">
    <citation type="submission" date="1999-04" db="EMBL/GenBank/DDBJ databases">
        <title>Expression, isolation, and metal-dependent catalysis of phenylalanine hydroxylase from Chromobacterium violaceum.</title>
        <authorList>
            <person name="Volner A."/>
            <person name="Nersissian A.M."/>
            <person name="Abu-Omar M.M."/>
        </authorList>
    </citation>
    <scope>NUCLEOTIDE SEQUENCE [GENOMIC DNA]</scope>
    <source>
        <strain>ATCC 12540 / LMG 3962 / NCTC 9695</strain>
    </source>
</reference>
<reference key="3">
    <citation type="journal article" date="2003" name="Proc. Natl. Acad. Sci. U.S.A.">
        <title>The complete genome sequence of Chromobacterium violaceum reveals remarkable and exploitable bacterial adaptability.</title>
        <authorList>
            <person name="Vasconcelos A.T.R."/>
            <person name="de Almeida D.F."/>
            <person name="Hungria M."/>
            <person name="Guimaraes C.T."/>
            <person name="Antonio R.V."/>
            <person name="Almeida F.C."/>
            <person name="de Almeida L.G.P."/>
            <person name="de Almeida R."/>
            <person name="Alves-Gomes J.A."/>
            <person name="Andrade E.M."/>
            <person name="Araripe J."/>
            <person name="de Araujo M.F.F."/>
            <person name="Astolfi-Filho S."/>
            <person name="Azevedo V."/>
            <person name="Baptista A.J."/>
            <person name="Bataus L.A.M."/>
            <person name="Batista J.S."/>
            <person name="Belo A."/>
            <person name="van den Berg C."/>
            <person name="Bogo M."/>
            <person name="Bonatto S."/>
            <person name="Bordignon J."/>
            <person name="Brigido M.M."/>
            <person name="Brito C.A."/>
            <person name="Brocchi M."/>
            <person name="Burity H.A."/>
            <person name="Camargo A.A."/>
            <person name="Cardoso D.D.P."/>
            <person name="Carneiro N.P."/>
            <person name="Carraro D.M."/>
            <person name="Carvalho C.M.B."/>
            <person name="Cascardo J.C.M."/>
            <person name="Cavada B.S."/>
            <person name="Chueire L.M.O."/>
            <person name="Creczynski-Pasa T.B."/>
            <person name="Cunha-Junior N.C."/>
            <person name="Fagundes N."/>
            <person name="Falcao C.L."/>
            <person name="Fantinatti F."/>
            <person name="Farias I.P."/>
            <person name="Felipe M.S.S."/>
            <person name="Ferrari L.P."/>
            <person name="Ferro J.A."/>
            <person name="Ferro M.I.T."/>
            <person name="Franco G.R."/>
            <person name="Freitas N.S.A."/>
            <person name="Furlan L.R."/>
            <person name="Gazzinelli R.T."/>
            <person name="Gomes E.A."/>
            <person name="Goncalves P.R."/>
            <person name="Grangeiro T.B."/>
            <person name="Grattapaglia D."/>
            <person name="Grisard E.C."/>
            <person name="Hanna E.S."/>
            <person name="Jardim S.N."/>
            <person name="Laurino J."/>
            <person name="Leoi L.C.T."/>
            <person name="Lima L.F.A."/>
            <person name="Loureiro M.F."/>
            <person name="Lyra M.C.C.P."/>
            <person name="Madeira H.M.F."/>
            <person name="Manfio G.P."/>
            <person name="Maranhao A.Q."/>
            <person name="Martins W.S."/>
            <person name="di Mauro S.M.Z."/>
            <person name="de Medeiros S.R.B."/>
            <person name="Meissner R.V."/>
            <person name="Moreira M.A.M."/>
            <person name="Nascimento F.F."/>
            <person name="Nicolas M.F."/>
            <person name="Oliveira J.G."/>
            <person name="Oliveira S.C."/>
            <person name="Paixao R.F.C."/>
            <person name="Parente J.A."/>
            <person name="Pedrosa F.O."/>
            <person name="Pena S.D.J."/>
            <person name="Pereira J.O."/>
            <person name="Pereira M."/>
            <person name="Pinto L.S.R.C."/>
            <person name="Pinto L.S."/>
            <person name="Porto J.I.R."/>
            <person name="Potrich D.P."/>
            <person name="Ramalho-Neto C.E."/>
            <person name="Reis A.M.M."/>
            <person name="Rigo L.U."/>
            <person name="Rondinelli E."/>
            <person name="Santos E.B.P."/>
            <person name="Santos F.R."/>
            <person name="Schneider M.P.C."/>
            <person name="Seuanez H.N."/>
            <person name="Silva A.M.R."/>
            <person name="da Silva A.L.C."/>
            <person name="Silva D.W."/>
            <person name="Silva R."/>
            <person name="Simoes I.C."/>
            <person name="Simon D."/>
            <person name="Soares C.M.A."/>
            <person name="Soares R.B.A."/>
            <person name="Souza E.M."/>
            <person name="Souza K.R.L."/>
            <person name="Souza R.C."/>
            <person name="Steffens M.B.R."/>
            <person name="Steindel M."/>
            <person name="Teixeira S.R."/>
            <person name="Urmenyi T."/>
            <person name="Vettore A."/>
            <person name="Wassem R."/>
            <person name="Zaha A."/>
            <person name="Simpson A.J.G."/>
        </authorList>
    </citation>
    <scope>NUCLEOTIDE SEQUENCE [LARGE SCALE GENOMIC DNA]</scope>
    <source>
        <strain>ATCC 12472 / DSM 30191 / JCM 1249 / CCUG 213 / NBRC 12614 / NCIMB 9131 / NCTC 9757 / MK</strain>
    </source>
</reference>
<reference key="4">
    <citation type="journal article" date="2002" name="J. Mol. Biol.">
        <title>Structural comparison of bacterial and human iron-dependent phenylalanine hydroxylases: similar fold, different stability and reaction rates.</title>
        <authorList>
            <person name="Erlandsen H."/>
            <person name="Kim J.Y."/>
            <person name="Patch M.G."/>
            <person name="Han A."/>
            <person name="Volner A."/>
            <person name="Abu-Omar M.M."/>
            <person name="Stevens R.C."/>
        </authorList>
    </citation>
    <scope>X-RAY CRYSTALLOGRAPHY (1.4 ANGSTROMS)</scope>
</reference>
<evidence type="ECO:0000305" key="1"/>
<evidence type="ECO:0007829" key="2">
    <source>
        <dbReference type="PDB" id="1LTZ"/>
    </source>
</evidence>
<evidence type="ECO:0007829" key="3">
    <source>
        <dbReference type="PDB" id="3TK2"/>
    </source>
</evidence>
<protein>
    <recommendedName>
        <fullName>Phenylalanine-4-hydroxylase</fullName>
        <shortName>PAH</shortName>
        <ecNumber>1.14.16.1</ecNumber>
    </recommendedName>
    <alternativeName>
        <fullName>Phe-4-monooxygenase</fullName>
    </alternativeName>
</protein>
<keyword id="KW-0002">3D-structure</keyword>
<keyword id="KW-0903">Direct protein sequencing</keyword>
<keyword id="KW-0408">Iron</keyword>
<keyword id="KW-0479">Metal-binding</keyword>
<keyword id="KW-0503">Monooxygenase</keyword>
<keyword id="KW-0560">Oxidoreductase</keyword>
<keyword id="KW-0585">Phenylalanine catabolism</keyword>
<keyword id="KW-1185">Reference proteome</keyword>
<gene>
    <name type="primary">phhA</name>
    <name type="ordered locus">CV_3180</name>
</gene>
<sequence length="297" mass="33616">MNDRADFVVPDITTRKNVGLSHDANDFTLPQPLDRYSAEDHATWATLYQRQCKLLPGRACDEFMEGLERLEVDADRVPDFNKLNQKLMAATGWKIVAVPGLIPDDVFFEHLANRRFPVTWWLREPHQLDYLQEPDVFHDLFGHVPLLINPVFADYLEAYGKGGVKAKALGALPMLARLYWYTVEFGLINTPAGMRIYGAGILSSKSESIYCLDSASPNRVGFDLMRIMNTRYRIDTFQKTYFVIDSFKQLFDATAPDFAPLYLQLADAQPWGAGDVAPDDLVLNAGDRQGWADTEDV</sequence>
<feature type="chain" id="PRO_0000205553" description="Phenylalanine-4-hydroxylase">
    <location>
        <begin position="1"/>
        <end position="297"/>
    </location>
</feature>
<feature type="binding site">
    <location>
        <position position="138"/>
    </location>
    <ligand>
        <name>Fe cation</name>
        <dbReference type="ChEBI" id="CHEBI:24875"/>
    </ligand>
</feature>
<feature type="binding site">
    <location>
        <position position="143"/>
    </location>
    <ligand>
        <name>Fe cation</name>
        <dbReference type="ChEBI" id="CHEBI:24875"/>
    </ligand>
</feature>
<feature type="binding site">
    <location>
        <position position="184"/>
    </location>
    <ligand>
        <name>Fe cation</name>
        <dbReference type="ChEBI" id="CHEBI:24875"/>
    </ligand>
</feature>
<feature type="sequence conflict" description="In Ref. 1 and 2." evidence="1" ref="1 2">
    <original>M</original>
    <variation>L</variation>
    <location>
        <position position="64"/>
    </location>
</feature>
<feature type="sequence conflict" description="In Ref. 1 and 2." evidence="1" ref="1 2">
    <original>Q</original>
    <variation>E</variation>
    <location>
        <position position="85"/>
    </location>
</feature>
<feature type="sequence conflict" description="In Ref. 1 and 2." evidence="1" ref="1 2">
    <original>V</original>
    <variation>I</variation>
    <location>
        <position position="276"/>
    </location>
</feature>
<feature type="sequence conflict" description="In Ref. 1 and 2." evidence="1" ref="1 2">
    <original>R</original>
    <variation>H</variation>
    <location>
        <position position="288"/>
    </location>
</feature>
<feature type="helix" evidence="3">
    <location>
        <begin position="12"/>
        <end position="16"/>
    </location>
</feature>
<feature type="turn" evidence="3">
    <location>
        <begin position="17"/>
        <end position="19"/>
    </location>
</feature>
<feature type="turn" evidence="3">
    <location>
        <begin position="24"/>
        <end position="26"/>
    </location>
</feature>
<feature type="helix" evidence="3">
    <location>
        <begin position="33"/>
        <end position="35"/>
    </location>
</feature>
<feature type="helix" evidence="3">
    <location>
        <begin position="38"/>
        <end position="54"/>
    </location>
</feature>
<feature type="turn" evidence="3">
    <location>
        <begin position="56"/>
        <end position="58"/>
    </location>
</feature>
<feature type="helix" evidence="3">
    <location>
        <begin position="61"/>
        <end position="69"/>
    </location>
</feature>
<feature type="strand" evidence="3">
    <location>
        <begin position="74"/>
        <end position="76"/>
    </location>
</feature>
<feature type="helix" evidence="3">
    <location>
        <begin position="80"/>
        <end position="91"/>
    </location>
</feature>
<feature type="strand" evidence="3">
    <location>
        <begin position="94"/>
        <end position="101"/>
    </location>
</feature>
<feature type="helix" evidence="3">
    <location>
        <begin position="104"/>
        <end position="112"/>
    </location>
</feature>
<feature type="strand" evidence="3">
    <location>
        <begin position="115"/>
        <end position="119"/>
    </location>
</feature>
<feature type="helix" evidence="3">
    <location>
        <begin position="125"/>
        <end position="127"/>
    </location>
</feature>
<feature type="strand" evidence="2">
    <location>
        <begin position="128"/>
        <end position="130"/>
    </location>
</feature>
<feature type="helix" evidence="3">
    <location>
        <begin position="136"/>
        <end position="143"/>
    </location>
</feature>
<feature type="helix" evidence="3">
    <location>
        <begin position="145"/>
        <end position="148"/>
    </location>
</feature>
<feature type="helix" evidence="3">
    <location>
        <begin position="150"/>
        <end position="161"/>
    </location>
</feature>
<feature type="helix" evidence="3">
    <location>
        <begin position="163"/>
        <end position="168"/>
    </location>
</feature>
<feature type="helix" evidence="3">
    <location>
        <begin position="172"/>
        <end position="181"/>
    </location>
</feature>
<feature type="turn" evidence="3">
    <location>
        <begin position="182"/>
        <end position="185"/>
    </location>
</feature>
<feature type="strand" evidence="2">
    <location>
        <begin position="187"/>
        <end position="190"/>
    </location>
</feature>
<feature type="strand" evidence="2">
    <location>
        <begin position="193"/>
        <end position="196"/>
    </location>
</feature>
<feature type="helix" evidence="3">
    <location>
        <begin position="199"/>
        <end position="202"/>
    </location>
</feature>
<feature type="helix" evidence="3">
    <location>
        <begin position="207"/>
        <end position="213"/>
    </location>
</feature>
<feature type="strand" evidence="3">
    <location>
        <begin position="215"/>
        <end position="221"/>
    </location>
</feature>
<feature type="helix" evidence="3">
    <location>
        <begin position="224"/>
        <end position="228"/>
    </location>
</feature>
<feature type="strand" evidence="3">
    <location>
        <begin position="234"/>
        <end position="236"/>
    </location>
</feature>
<feature type="strand" evidence="3">
    <location>
        <begin position="239"/>
        <end position="245"/>
    </location>
</feature>
<feature type="helix" evidence="3">
    <location>
        <begin position="247"/>
        <end position="253"/>
    </location>
</feature>
<feature type="helix" evidence="3">
    <location>
        <begin position="259"/>
        <end position="266"/>
    </location>
</feature>